<reference key="1">
    <citation type="journal article" date="2004" name="Nature">
        <title>Genome sequence of the Brown Norway rat yields insights into mammalian evolution.</title>
        <authorList>
            <person name="Gibbs R.A."/>
            <person name="Weinstock G.M."/>
            <person name="Metzker M.L."/>
            <person name="Muzny D.M."/>
            <person name="Sodergren E.J."/>
            <person name="Scherer S."/>
            <person name="Scott G."/>
            <person name="Steffen D."/>
            <person name="Worley K.C."/>
            <person name="Burch P.E."/>
            <person name="Okwuonu G."/>
            <person name="Hines S."/>
            <person name="Lewis L."/>
            <person name="Deramo C."/>
            <person name="Delgado O."/>
            <person name="Dugan-Rocha S."/>
            <person name="Miner G."/>
            <person name="Morgan M."/>
            <person name="Hawes A."/>
            <person name="Gill R."/>
            <person name="Holt R.A."/>
            <person name="Adams M.D."/>
            <person name="Amanatides P.G."/>
            <person name="Baden-Tillson H."/>
            <person name="Barnstead M."/>
            <person name="Chin S."/>
            <person name="Evans C.A."/>
            <person name="Ferriera S."/>
            <person name="Fosler C."/>
            <person name="Glodek A."/>
            <person name="Gu Z."/>
            <person name="Jennings D."/>
            <person name="Kraft C.L."/>
            <person name="Nguyen T."/>
            <person name="Pfannkoch C.M."/>
            <person name="Sitter C."/>
            <person name="Sutton G.G."/>
            <person name="Venter J.C."/>
            <person name="Woodage T."/>
            <person name="Smith D."/>
            <person name="Lee H.-M."/>
            <person name="Gustafson E."/>
            <person name="Cahill P."/>
            <person name="Kana A."/>
            <person name="Doucette-Stamm L."/>
            <person name="Weinstock K."/>
            <person name="Fechtel K."/>
            <person name="Weiss R.B."/>
            <person name="Dunn D.M."/>
            <person name="Green E.D."/>
            <person name="Blakesley R.W."/>
            <person name="Bouffard G.G."/>
            <person name="De Jong P.J."/>
            <person name="Osoegawa K."/>
            <person name="Zhu B."/>
            <person name="Marra M."/>
            <person name="Schein J."/>
            <person name="Bosdet I."/>
            <person name="Fjell C."/>
            <person name="Jones S."/>
            <person name="Krzywinski M."/>
            <person name="Mathewson C."/>
            <person name="Siddiqui A."/>
            <person name="Wye N."/>
            <person name="McPherson J."/>
            <person name="Zhao S."/>
            <person name="Fraser C.M."/>
            <person name="Shetty J."/>
            <person name="Shatsman S."/>
            <person name="Geer K."/>
            <person name="Chen Y."/>
            <person name="Abramzon S."/>
            <person name="Nierman W.C."/>
            <person name="Havlak P.H."/>
            <person name="Chen R."/>
            <person name="Durbin K.J."/>
            <person name="Egan A."/>
            <person name="Ren Y."/>
            <person name="Song X.-Z."/>
            <person name="Li B."/>
            <person name="Liu Y."/>
            <person name="Qin X."/>
            <person name="Cawley S."/>
            <person name="Cooney A.J."/>
            <person name="D'Souza L.M."/>
            <person name="Martin K."/>
            <person name="Wu J.Q."/>
            <person name="Gonzalez-Garay M.L."/>
            <person name="Jackson A.R."/>
            <person name="Kalafus K.J."/>
            <person name="McLeod M.P."/>
            <person name="Milosavljevic A."/>
            <person name="Virk D."/>
            <person name="Volkov A."/>
            <person name="Wheeler D.A."/>
            <person name="Zhang Z."/>
            <person name="Bailey J.A."/>
            <person name="Eichler E.E."/>
            <person name="Tuzun E."/>
            <person name="Birney E."/>
            <person name="Mongin E."/>
            <person name="Ureta-Vidal A."/>
            <person name="Woodwark C."/>
            <person name="Zdobnov E."/>
            <person name="Bork P."/>
            <person name="Suyama M."/>
            <person name="Torrents D."/>
            <person name="Alexandersson M."/>
            <person name="Trask B.J."/>
            <person name="Young J.M."/>
            <person name="Huang H."/>
            <person name="Wang H."/>
            <person name="Xing H."/>
            <person name="Daniels S."/>
            <person name="Gietzen D."/>
            <person name="Schmidt J."/>
            <person name="Stevens K."/>
            <person name="Vitt U."/>
            <person name="Wingrove J."/>
            <person name="Camara F."/>
            <person name="Mar Alba M."/>
            <person name="Abril J.F."/>
            <person name="Guigo R."/>
            <person name="Smit A."/>
            <person name="Dubchak I."/>
            <person name="Rubin E.M."/>
            <person name="Couronne O."/>
            <person name="Poliakov A."/>
            <person name="Huebner N."/>
            <person name="Ganten D."/>
            <person name="Goesele C."/>
            <person name="Hummel O."/>
            <person name="Kreitler T."/>
            <person name="Lee Y.-A."/>
            <person name="Monti J."/>
            <person name="Schulz H."/>
            <person name="Zimdahl H."/>
            <person name="Himmelbauer H."/>
            <person name="Lehrach H."/>
            <person name="Jacob H.J."/>
            <person name="Bromberg S."/>
            <person name="Gullings-Handley J."/>
            <person name="Jensen-Seaman M.I."/>
            <person name="Kwitek A.E."/>
            <person name="Lazar J."/>
            <person name="Pasko D."/>
            <person name="Tonellato P.J."/>
            <person name="Twigger S."/>
            <person name="Ponting C.P."/>
            <person name="Duarte J.M."/>
            <person name="Rice S."/>
            <person name="Goodstadt L."/>
            <person name="Beatson S.A."/>
            <person name="Emes R.D."/>
            <person name="Winter E.E."/>
            <person name="Webber C."/>
            <person name="Brandt P."/>
            <person name="Nyakatura G."/>
            <person name="Adetobi M."/>
            <person name="Chiaromonte F."/>
            <person name="Elnitski L."/>
            <person name="Eswara P."/>
            <person name="Hardison R.C."/>
            <person name="Hou M."/>
            <person name="Kolbe D."/>
            <person name="Makova K."/>
            <person name="Miller W."/>
            <person name="Nekrutenko A."/>
            <person name="Riemer C."/>
            <person name="Schwartz S."/>
            <person name="Taylor J."/>
            <person name="Yang S."/>
            <person name="Zhang Y."/>
            <person name="Lindpaintner K."/>
            <person name="Andrews T.D."/>
            <person name="Caccamo M."/>
            <person name="Clamp M."/>
            <person name="Clarke L."/>
            <person name="Curwen V."/>
            <person name="Durbin R.M."/>
            <person name="Eyras E."/>
            <person name="Searle S.M."/>
            <person name="Cooper G.M."/>
            <person name="Batzoglou S."/>
            <person name="Brudno M."/>
            <person name="Sidow A."/>
            <person name="Stone E.A."/>
            <person name="Payseur B.A."/>
            <person name="Bourque G."/>
            <person name="Lopez-Otin C."/>
            <person name="Puente X.S."/>
            <person name="Chakrabarti K."/>
            <person name="Chatterji S."/>
            <person name="Dewey C."/>
            <person name="Pachter L."/>
            <person name="Bray N."/>
            <person name="Yap V.B."/>
            <person name="Caspi A."/>
            <person name="Tesler G."/>
            <person name="Pevzner P.A."/>
            <person name="Haussler D."/>
            <person name="Roskin K.M."/>
            <person name="Baertsch R."/>
            <person name="Clawson H."/>
            <person name="Furey T.S."/>
            <person name="Hinrichs A.S."/>
            <person name="Karolchik D."/>
            <person name="Kent W.J."/>
            <person name="Rosenbloom K.R."/>
            <person name="Trumbower H."/>
            <person name="Weirauch M."/>
            <person name="Cooper D.N."/>
            <person name="Stenson P.D."/>
            <person name="Ma B."/>
            <person name="Brent M."/>
            <person name="Arumugam M."/>
            <person name="Shteynberg D."/>
            <person name="Copley R.R."/>
            <person name="Taylor M.S."/>
            <person name="Riethman H."/>
            <person name="Mudunuri U."/>
            <person name="Peterson J."/>
            <person name="Guyer M."/>
            <person name="Felsenfeld A."/>
            <person name="Old S."/>
            <person name="Mockrin S."/>
            <person name="Collins F.S."/>
        </authorList>
    </citation>
    <scope>NUCLEOTIDE SEQUENCE [LARGE SCALE GENOMIC DNA]</scope>
    <source>
        <strain>Brown Norway</strain>
    </source>
</reference>
<reference key="2">
    <citation type="journal article" date="1991" name="Biochem. Biophys. Res. Commun.">
        <title>cDNA cloning and regulation of a novel rat cytochrome P450 of the 2C gene subfamily (P450IIC24).</title>
        <authorList>
            <person name="Zaphiropoulos P.G."/>
        </authorList>
    </citation>
    <scope>NUCLEOTIDE SEQUENCE [GENOMIC DNA] OF 57-490</scope>
</reference>
<organism>
    <name type="scientific">Rattus norvegicus</name>
    <name type="common">Rat</name>
    <dbReference type="NCBI Taxonomy" id="10116"/>
    <lineage>
        <taxon>Eukaryota</taxon>
        <taxon>Metazoa</taxon>
        <taxon>Chordata</taxon>
        <taxon>Craniata</taxon>
        <taxon>Vertebrata</taxon>
        <taxon>Euteleostomi</taxon>
        <taxon>Mammalia</taxon>
        <taxon>Eutheria</taxon>
        <taxon>Euarchontoglires</taxon>
        <taxon>Glires</taxon>
        <taxon>Rodentia</taxon>
        <taxon>Myomorpha</taxon>
        <taxon>Muroidea</taxon>
        <taxon>Muridae</taxon>
        <taxon>Murinae</taxon>
        <taxon>Rattus</taxon>
    </lineage>
</organism>
<feature type="chain" id="PRO_0000051712" description="Cytochrome P450 2C55">
    <location>
        <begin position="1"/>
        <end position="490"/>
    </location>
</feature>
<feature type="binding site" description="axial binding residue" evidence="1">
    <location>
        <position position="435"/>
    </location>
    <ligand>
        <name>heme</name>
        <dbReference type="ChEBI" id="CHEBI:30413"/>
    </ligand>
    <ligandPart>
        <name>Fe</name>
        <dbReference type="ChEBI" id="CHEBI:18248"/>
    </ligandPart>
</feature>
<feature type="sequence conflict" description="In Ref. 2; M86677." evidence="2" ref="2">
    <original>H</original>
    <variation>R</variation>
    <location>
        <position position="125"/>
    </location>
</feature>
<feature type="sequence conflict" description="In Ref. 2; M86677." evidence="2" ref="2">
    <original>T</original>
    <variation>I</variation>
    <location>
        <position position="317"/>
    </location>
</feature>
<feature type="sequence conflict" description="In Ref. 2; M86677." evidence="2" ref="2">
    <original>V</original>
    <variation>L</variation>
    <location>
        <position position="388"/>
    </location>
</feature>
<accession>P33273</accession>
<keyword id="KW-0256">Endoplasmic reticulum</keyword>
<keyword id="KW-0349">Heme</keyword>
<keyword id="KW-0408">Iron</keyword>
<keyword id="KW-0472">Membrane</keyword>
<keyword id="KW-0479">Metal-binding</keyword>
<keyword id="KW-0492">Microsome</keyword>
<keyword id="KW-0503">Monooxygenase</keyword>
<keyword id="KW-0560">Oxidoreductase</keyword>
<keyword id="KW-1185">Reference proteome</keyword>
<protein>
    <recommendedName>
        <fullName>Cytochrome P450 2C55</fullName>
        <ecNumber>1.14.14.1</ecNumber>
    </recommendedName>
    <alternativeName>
        <fullName>CYPIIC24</fullName>
    </alternativeName>
    <alternativeName>
        <fullName>CYPIIC55</fullName>
    </alternativeName>
    <alternativeName>
        <fullName>Cytochrome P450 2C24</fullName>
    </alternativeName>
    <alternativeName>
        <fullName>Cytochrome P450-PROS2</fullName>
    </alternativeName>
</protein>
<dbReference type="EC" id="1.14.14.1"/>
<dbReference type="EMBL" id="AC121010">
    <property type="status" value="NOT_ANNOTATED_CDS"/>
    <property type="molecule type" value="Genomic_DNA"/>
</dbReference>
<dbReference type="EMBL" id="M86677">
    <property type="status" value="NOT_ANNOTATED_CDS"/>
    <property type="molecule type" value="Genomic_DNA"/>
</dbReference>
<dbReference type="EMBL" id="M86678">
    <property type="status" value="NOT_ANNOTATED_CDS"/>
    <property type="molecule type" value="Genomic_DNA"/>
</dbReference>
<dbReference type="PIR" id="JH0451">
    <property type="entry name" value="JH0451"/>
</dbReference>
<dbReference type="SMR" id="P33273"/>
<dbReference type="FunCoup" id="P33273">
    <property type="interactions" value="63"/>
</dbReference>
<dbReference type="STRING" id="10116.ENSRNOP00000051612"/>
<dbReference type="GlyGen" id="P33273">
    <property type="glycosylation" value="1 site"/>
</dbReference>
<dbReference type="PhosphoSitePlus" id="P33273"/>
<dbReference type="PaxDb" id="10116-ENSRNOP00000001990"/>
<dbReference type="AGR" id="RGD:1563697"/>
<dbReference type="AGR" id="RGD:2320073"/>
<dbReference type="RGD" id="2320073">
    <property type="gene designation" value="Cyp2c55"/>
</dbReference>
<dbReference type="eggNOG" id="KOG0156">
    <property type="taxonomic scope" value="Eukaryota"/>
</dbReference>
<dbReference type="InParanoid" id="P33273"/>
<dbReference type="OrthoDB" id="1103324at2759"/>
<dbReference type="PhylomeDB" id="P33273"/>
<dbReference type="PRO" id="PR:P33273"/>
<dbReference type="Proteomes" id="UP000002494">
    <property type="component" value="Unplaced"/>
</dbReference>
<dbReference type="GO" id="GO:0005789">
    <property type="term" value="C:endoplasmic reticulum membrane"/>
    <property type="evidence" value="ECO:0007669"/>
    <property type="project" value="UniProtKB-SubCell"/>
</dbReference>
<dbReference type="GO" id="GO:0020037">
    <property type="term" value="F:heme binding"/>
    <property type="evidence" value="ECO:0007669"/>
    <property type="project" value="InterPro"/>
</dbReference>
<dbReference type="GO" id="GO:0005506">
    <property type="term" value="F:iron ion binding"/>
    <property type="evidence" value="ECO:0007669"/>
    <property type="project" value="InterPro"/>
</dbReference>
<dbReference type="GO" id="GO:0016712">
    <property type="term" value="F:oxidoreductase activity, acting on paired donors, with incorporation or reduction of molecular oxygen, reduced flavin or flavoprotein as one donor, and incorporation of one atom of oxygen"/>
    <property type="evidence" value="ECO:0007669"/>
    <property type="project" value="UniProtKB-EC"/>
</dbReference>
<dbReference type="CDD" id="cd20665">
    <property type="entry name" value="CYP2C-like"/>
    <property type="match status" value="1"/>
</dbReference>
<dbReference type="FunFam" id="1.10.630.10:FF:000299">
    <property type="entry name" value="Cytochrome P450 2C9"/>
    <property type="match status" value="1"/>
</dbReference>
<dbReference type="Gene3D" id="1.10.630.10">
    <property type="entry name" value="Cytochrome P450"/>
    <property type="match status" value="1"/>
</dbReference>
<dbReference type="InterPro" id="IPR001128">
    <property type="entry name" value="Cyt_P450"/>
</dbReference>
<dbReference type="InterPro" id="IPR017972">
    <property type="entry name" value="Cyt_P450_CS"/>
</dbReference>
<dbReference type="InterPro" id="IPR002401">
    <property type="entry name" value="Cyt_P450_E_grp-I"/>
</dbReference>
<dbReference type="InterPro" id="IPR036396">
    <property type="entry name" value="Cyt_P450_sf"/>
</dbReference>
<dbReference type="InterPro" id="IPR050182">
    <property type="entry name" value="Cytochrome_P450_fam2"/>
</dbReference>
<dbReference type="PANTHER" id="PTHR24300:SF423">
    <property type="entry name" value="CYTOCHROME P450 2C18"/>
    <property type="match status" value="1"/>
</dbReference>
<dbReference type="PANTHER" id="PTHR24300">
    <property type="entry name" value="CYTOCHROME P450 508A4-RELATED"/>
    <property type="match status" value="1"/>
</dbReference>
<dbReference type="Pfam" id="PF00067">
    <property type="entry name" value="p450"/>
    <property type="match status" value="1"/>
</dbReference>
<dbReference type="PRINTS" id="PR00463">
    <property type="entry name" value="EP450I"/>
</dbReference>
<dbReference type="PRINTS" id="PR00385">
    <property type="entry name" value="P450"/>
</dbReference>
<dbReference type="SUPFAM" id="SSF48264">
    <property type="entry name" value="Cytochrome P450"/>
    <property type="match status" value="1"/>
</dbReference>
<dbReference type="PROSITE" id="PS00086">
    <property type="entry name" value="CYTOCHROME_P450"/>
    <property type="match status" value="1"/>
</dbReference>
<sequence>MDPVLVLVLTLSCLLLLSLWRQSSGRGKLPPGPTPLPIIGNILQIDVKDISKSFSYFSKIYGPVFTLYFGPKPTVVVHGYEAVKEALDDLGEEFSGRGSFPIVERMNNGLGLIFSNGTKWKELRHFSLMTLRNFGMGKRSIEDRIQEEASCLVEELRKTNGSLCDPTFILSCAPSNVICSVVFHNRFDYKDENFLNLMEKLNENFKILNSPWMQVCNALPAFIDYLPGSHNRVIKNFAEIKSYILRRVKEHQETLDMDNPRDFIDCFLIKMEQEKHNPRTEFTIESLMATVSDVFVAGSETTSTTLRYGLLLLLKHTEVTAKVQEEIDHVIGRHRRPCMQDRTRMPYTDAMVHEIQRYINLIPNNVPHAATCNVRFRNYVIPKGTDLVTSLTSVLHDDKEFPNPEVFDPGHFLDENGNFKKSDYFMPFSTGKRMCVGEALARMELFLLLTTIVQNFNLKSFVDTKDIDTTPMANTFGRVPPSYQLCFIPR</sequence>
<comment type="function">
    <text evidence="1">Metabolizes arachidonic acid mainly to 19-hydroxyeicosatetraenoic acid (HETE).</text>
</comment>
<comment type="catalytic activity">
    <reaction>
        <text>an organic molecule + reduced [NADPH--hemoprotein reductase] + O2 = an alcohol + oxidized [NADPH--hemoprotein reductase] + H2O + H(+)</text>
        <dbReference type="Rhea" id="RHEA:17149"/>
        <dbReference type="Rhea" id="RHEA-COMP:11964"/>
        <dbReference type="Rhea" id="RHEA-COMP:11965"/>
        <dbReference type="ChEBI" id="CHEBI:15377"/>
        <dbReference type="ChEBI" id="CHEBI:15378"/>
        <dbReference type="ChEBI" id="CHEBI:15379"/>
        <dbReference type="ChEBI" id="CHEBI:30879"/>
        <dbReference type="ChEBI" id="CHEBI:57618"/>
        <dbReference type="ChEBI" id="CHEBI:58210"/>
        <dbReference type="ChEBI" id="CHEBI:142491"/>
        <dbReference type="EC" id="1.14.14.1"/>
    </reaction>
</comment>
<comment type="cofactor">
    <cofactor evidence="1">
        <name>heme</name>
        <dbReference type="ChEBI" id="CHEBI:30413"/>
    </cofactor>
</comment>
<comment type="subcellular location">
    <subcellularLocation>
        <location>Endoplasmic reticulum membrane</location>
        <topology>Peripheral membrane protein</topology>
    </subcellularLocation>
    <subcellularLocation>
        <location>Microsome membrane</location>
        <topology>Peripheral membrane protein</topology>
    </subcellularLocation>
</comment>
<comment type="induction">
    <text>P450 can be induced to high levels in liver and other tissues by various foreign compounds, including drugs, pesticides, and carcinogens.</text>
</comment>
<comment type="similarity">
    <text evidence="2">Belongs to the cytochrome P450 family.</text>
</comment>
<proteinExistence type="evidence at transcript level"/>
<gene>
    <name type="primary">Cyp2c55</name>
    <name type="synonym">Cyp2c-55</name>
    <name type="synonym">Cyp2c24</name>
</gene>
<name>CP255_RAT</name>
<evidence type="ECO:0000250" key="1"/>
<evidence type="ECO:0000305" key="2"/>